<name>SHR2_ORYSI</name>
<protein>
    <recommendedName>
        <fullName>Protein SHORT-ROOT 2</fullName>
    </recommendedName>
    <alternativeName>
        <fullName>OsSHR2</fullName>
    </alternativeName>
</protein>
<evidence type="ECO:0000250" key="1"/>
<evidence type="ECO:0000255" key="2">
    <source>
        <dbReference type="PROSITE-ProRule" id="PRU01191"/>
    </source>
</evidence>
<evidence type="ECO:0000256" key="3">
    <source>
        <dbReference type="SAM" id="MobiDB-lite"/>
    </source>
</evidence>
<evidence type="ECO:0000305" key="4"/>
<proteinExistence type="inferred from homology"/>
<organism>
    <name type="scientific">Oryza sativa subsp. indica</name>
    <name type="common">Rice</name>
    <dbReference type="NCBI Taxonomy" id="39946"/>
    <lineage>
        <taxon>Eukaryota</taxon>
        <taxon>Viridiplantae</taxon>
        <taxon>Streptophyta</taxon>
        <taxon>Embryophyta</taxon>
        <taxon>Tracheophyta</taxon>
        <taxon>Spermatophyta</taxon>
        <taxon>Magnoliopsida</taxon>
        <taxon>Liliopsida</taxon>
        <taxon>Poales</taxon>
        <taxon>Poaceae</taxon>
        <taxon>BOP clade</taxon>
        <taxon>Oryzoideae</taxon>
        <taxon>Oryzeae</taxon>
        <taxon>Oryzinae</taxon>
        <taxon>Oryza</taxon>
        <taxon>Oryza sativa</taxon>
    </lineage>
</organism>
<dbReference type="EMBL" id="CM000128">
    <property type="protein sequence ID" value="EAY90568.1"/>
    <property type="molecule type" value="Genomic_DNA"/>
</dbReference>
<dbReference type="SMR" id="A2XIA8"/>
<dbReference type="STRING" id="39946.A2XIA8"/>
<dbReference type="EnsemblPlants" id="BGIOSGA010480-TA">
    <property type="protein sequence ID" value="BGIOSGA010480-PA"/>
    <property type="gene ID" value="BGIOSGA010480"/>
</dbReference>
<dbReference type="EnsemblPlants" id="OsGoSa_03g0022590.01">
    <property type="protein sequence ID" value="OsGoSa_03g0022590.01"/>
    <property type="gene ID" value="OsGoSa_03g0022590"/>
</dbReference>
<dbReference type="EnsemblPlants" id="OsIR64_03g0022180.01">
    <property type="protein sequence ID" value="OsIR64_03g0022180.01"/>
    <property type="gene ID" value="OsIR64_03g0022180"/>
</dbReference>
<dbReference type="EnsemblPlants" id="OsKYG_03g0022460.01">
    <property type="protein sequence ID" value="OsKYG_03g0022460.01"/>
    <property type="gene ID" value="OsKYG_03g0022460"/>
</dbReference>
<dbReference type="EnsemblPlants" id="OsLaMu_03g0022260.01">
    <property type="protein sequence ID" value="OsLaMu_03g0022260.01"/>
    <property type="gene ID" value="OsLaMu_03g0022260"/>
</dbReference>
<dbReference type="EnsemblPlants" id="OsLima_03g0022480.01">
    <property type="protein sequence ID" value="OsLima_03g0022480.01"/>
    <property type="gene ID" value="OsLima_03g0022480"/>
</dbReference>
<dbReference type="EnsemblPlants" id="OsLiXu_03g0022410.01">
    <property type="protein sequence ID" value="OsLiXu_03g0022410.01"/>
    <property type="gene ID" value="OsLiXu_03g0022410"/>
</dbReference>
<dbReference type="EnsemblPlants" id="OsMH63_03G022440_01">
    <property type="protein sequence ID" value="OsMH63_03G022440_01"/>
    <property type="gene ID" value="OsMH63_03G022440"/>
</dbReference>
<dbReference type="EnsemblPlants" id="OsPr106_03g0022430.01">
    <property type="protein sequence ID" value="OsPr106_03g0022430.01"/>
    <property type="gene ID" value="OsPr106_03g0022430"/>
</dbReference>
<dbReference type="Gramene" id="BGIOSGA010480-TA">
    <property type="protein sequence ID" value="BGIOSGA010480-PA"/>
    <property type="gene ID" value="BGIOSGA010480"/>
</dbReference>
<dbReference type="Gramene" id="OsGoSa_03g0022590.01">
    <property type="protein sequence ID" value="OsGoSa_03g0022590.01"/>
    <property type="gene ID" value="OsGoSa_03g0022590"/>
</dbReference>
<dbReference type="Gramene" id="OsIR64_03g0022180.01">
    <property type="protein sequence ID" value="OsIR64_03g0022180.01"/>
    <property type="gene ID" value="OsIR64_03g0022180"/>
</dbReference>
<dbReference type="Gramene" id="OsKYG_03g0022460.01">
    <property type="protein sequence ID" value="OsKYG_03g0022460.01"/>
    <property type="gene ID" value="OsKYG_03g0022460"/>
</dbReference>
<dbReference type="Gramene" id="OsLaMu_03g0022260.01">
    <property type="protein sequence ID" value="OsLaMu_03g0022260.01"/>
    <property type="gene ID" value="OsLaMu_03g0022260"/>
</dbReference>
<dbReference type="Gramene" id="OsLima_03g0022480.01">
    <property type="protein sequence ID" value="OsLima_03g0022480.01"/>
    <property type="gene ID" value="OsLima_03g0022480"/>
</dbReference>
<dbReference type="Gramene" id="OsLiXu_03g0022410.01">
    <property type="protein sequence ID" value="OsLiXu_03g0022410.01"/>
    <property type="gene ID" value="OsLiXu_03g0022410"/>
</dbReference>
<dbReference type="Gramene" id="OsMH63_03G022440_01">
    <property type="protein sequence ID" value="OsMH63_03G022440_01"/>
    <property type="gene ID" value="OsMH63_03G022440"/>
</dbReference>
<dbReference type="Gramene" id="OsPr106_03g0022430.01">
    <property type="protein sequence ID" value="OsPr106_03g0022430.01"/>
    <property type="gene ID" value="OsPr106_03g0022430"/>
</dbReference>
<dbReference type="HOGENOM" id="CLU_011924_5_1_1"/>
<dbReference type="OMA" id="IFLAWKD"/>
<dbReference type="OrthoDB" id="1913536at2759"/>
<dbReference type="Proteomes" id="UP000007015">
    <property type="component" value="Chromosome 3"/>
</dbReference>
<dbReference type="GO" id="GO:0005634">
    <property type="term" value="C:nucleus"/>
    <property type="evidence" value="ECO:0007669"/>
    <property type="project" value="UniProtKB-SubCell"/>
</dbReference>
<dbReference type="InterPro" id="IPR005202">
    <property type="entry name" value="TF_GRAS"/>
</dbReference>
<dbReference type="PANTHER" id="PTHR31636">
    <property type="entry name" value="OSJNBA0084A10.13 PROTEIN-RELATED"/>
    <property type="match status" value="1"/>
</dbReference>
<dbReference type="Pfam" id="PF03514">
    <property type="entry name" value="GRAS"/>
    <property type="match status" value="1"/>
</dbReference>
<dbReference type="PROSITE" id="PS50985">
    <property type="entry name" value="GRAS"/>
    <property type="match status" value="1"/>
</dbReference>
<accession>A2XIA8</accession>
<comment type="function">
    <text evidence="1">Putative transcription factor involved in asymmetric cell division.</text>
</comment>
<comment type="subunit">
    <text evidence="1">Does not interact with SCR1.</text>
</comment>
<comment type="subcellular location">
    <subcellularLocation>
        <location evidence="1">Nucleus</location>
    </subcellularLocation>
</comment>
<comment type="similarity">
    <text evidence="4">Belongs to the GRAS family.</text>
</comment>
<gene>
    <name type="primary">SHR2</name>
    <name type="ORF">OsI_011801</name>
</gene>
<keyword id="KW-0217">Developmental protein</keyword>
<keyword id="KW-0539">Nucleus</keyword>
<keyword id="KW-1185">Reference proteome</keyword>
<keyword id="KW-0804">Transcription</keyword>
<keyword id="KW-0805">Transcription regulation</keyword>
<reference key="1">
    <citation type="journal article" date="2005" name="PLoS Biol.">
        <title>The genomes of Oryza sativa: a history of duplications.</title>
        <authorList>
            <person name="Yu J."/>
            <person name="Wang J."/>
            <person name="Lin W."/>
            <person name="Li S."/>
            <person name="Li H."/>
            <person name="Zhou J."/>
            <person name="Ni P."/>
            <person name="Dong W."/>
            <person name="Hu S."/>
            <person name="Zeng C."/>
            <person name="Zhang J."/>
            <person name="Zhang Y."/>
            <person name="Li R."/>
            <person name="Xu Z."/>
            <person name="Li S."/>
            <person name="Li X."/>
            <person name="Zheng H."/>
            <person name="Cong L."/>
            <person name="Lin L."/>
            <person name="Yin J."/>
            <person name="Geng J."/>
            <person name="Li G."/>
            <person name="Shi J."/>
            <person name="Liu J."/>
            <person name="Lv H."/>
            <person name="Li J."/>
            <person name="Wang J."/>
            <person name="Deng Y."/>
            <person name="Ran L."/>
            <person name="Shi X."/>
            <person name="Wang X."/>
            <person name="Wu Q."/>
            <person name="Li C."/>
            <person name="Ren X."/>
            <person name="Wang J."/>
            <person name="Wang X."/>
            <person name="Li D."/>
            <person name="Liu D."/>
            <person name="Zhang X."/>
            <person name="Ji Z."/>
            <person name="Zhao W."/>
            <person name="Sun Y."/>
            <person name="Zhang Z."/>
            <person name="Bao J."/>
            <person name="Han Y."/>
            <person name="Dong L."/>
            <person name="Ji J."/>
            <person name="Chen P."/>
            <person name="Wu S."/>
            <person name="Liu J."/>
            <person name="Xiao Y."/>
            <person name="Bu D."/>
            <person name="Tan J."/>
            <person name="Yang L."/>
            <person name="Ye C."/>
            <person name="Zhang J."/>
            <person name="Xu J."/>
            <person name="Zhou Y."/>
            <person name="Yu Y."/>
            <person name="Zhang B."/>
            <person name="Zhuang S."/>
            <person name="Wei H."/>
            <person name="Liu B."/>
            <person name="Lei M."/>
            <person name="Yu H."/>
            <person name="Li Y."/>
            <person name="Xu H."/>
            <person name="Wei S."/>
            <person name="He X."/>
            <person name="Fang L."/>
            <person name="Zhang Z."/>
            <person name="Zhang Y."/>
            <person name="Huang X."/>
            <person name="Su Z."/>
            <person name="Tong W."/>
            <person name="Li J."/>
            <person name="Tong Z."/>
            <person name="Li S."/>
            <person name="Ye J."/>
            <person name="Wang L."/>
            <person name="Fang L."/>
            <person name="Lei T."/>
            <person name="Chen C.-S."/>
            <person name="Chen H.-C."/>
            <person name="Xu Z."/>
            <person name="Li H."/>
            <person name="Huang H."/>
            <person name="Zhang F."/>
            <person name="Xu H."/>
            <person name="Li N."/>
            <person name="Zhao C."/>
            <person name="Li S."/>
            <person name="Dong L."/>
            <person name="Huang Y."/>
            <person name="Li L."/>
            <person name="Xi Y."/>
            <person name="Qi Q."/>
            <person name="Li W."/>
            <person name="Zhang B."/>
            <person name="Hu W."/>
            <person name="Zhang Y."/>
            <person name="Tian X."/>
            <person name="Jiao Y."/>
            <person name="Liang X."/>
            <person name="Jin J."/>
            <person name="Gao L."/>
            <person name="Zheng W."/>
            <person name="Hao B."/>
            <person name="Liu S.-M."/>
            <person name="Wang W."/>
            <person name="Yuan L."/>
            <person name="Cao M."/>
            <person name="McDermott J."/>
            <person name="Samudrala R."/>
            <person name="Wang J."/>
            <person name="Wong G.K.-S."/>
            <person name="Yang H."/>
        </authorList>
    </citation>
    <scope>NUCLEOTIDE SEQUENCE [LARGE SCALE GENOMIC DNA]</scope>
    <source>
        <strain>cv. 93-11</strain>
    </source>
</reference>
<feature type="chain" id="PRO_0000329427" description="Protein SHORT-ROOT 2">
    <location>
        <begin position="1"/>
        <end position="603"/>
    </location>
</feature>
<feature type="domain" description="GRAS" evidence="2">
    <location>
        <begin position="179"/>
        <end position="602"/>
    </location>
</feature>
<feature type="region of interest" description="Disordered" evidence="3">
    <location>
        <begin position="11"/>
        <end position="58"/>
    </location>
</feature>
<feature type="region of interest" description="Disordered" evidence="3">
    <location>
        <begin position="106"/>
        <end position="140"/>
    </location>
</feature>
<feature type="region of interest" description="Leucine repeat I (LRI)" evidence="2">
    <location>
        <begin position="186"/>
        <end position="249"/>
    </location>
</feature>
<feature type="region of interest" description="VHIID" evidence="2">
    <location>
        <begin position="268"/>
        <end position="354"/>
    </location>
</feature>
<feature type="region of interest" description="Leucine repeat II (LRII)" evidence="2">
    <location>
        <begin position="370"/>
        <end position="406"/>
    </location>
</feature>
<feature type="region of interest" description="PFYRE" evidence="2">
    <location>
        <begin position="416"/>
        <end position="514"/>
    </location>
</feature>
<feature type="region of interest" description="SAW" evidence="2">
    <location>
        <begin position="517"/>
        <end position="602"/>
    </location>
</feature>
<feature type="short sequence motif" description="VHIID" evidence="2">
    <location>
        <begin position="318"/>
        <end position="322"/>
    </location>
</feature>
<feature type="compositionally biased region" description="Low complexity" evidence="3">
    <location>
        <begin position="31"/>
        <end position="44"/>
    </location>
</feature>
<feature type="compositionally biased region" description="Basic residues" evidence="3">
    <location>
        <begin position="45"/>
        <end position="58"/>
    </location>
</feature>
<feature type="compositionally biased region" description="Low complexity" evidence="3">
    <location>
        <begin position="108"/>
        <end position="125"/>
    </location>
</feature>
<sequence>MDTLFRLVSLHHHHHHQHAASPSPPDQPHKSYPSSRGSTSSPSSHHTHNHTYYHHSHSHYNNNSNTNYYYQGGGGGGGGYYYAEEQQPAAYLEECGNGHQFYMDEDFSSSSSSRQFHSGTGAPSSAPVPPPPSATTSSAGGHGLFEAADFSFPQVDISLDFGGSPAVPSSSGAGAGAGAAPSSSGRWAAQLLMECARAVAGRDSQRVQQLMWMLNELASPYGDVDQKLASYFLQGLFARLTTSGPRTLRTLATASDRNASFDSTRRTALKFQELSPWTPFGHVAANGAILESFLEAAAAGAAAASSSSSSSSTPPTRLHILDLSNTFCTQWPTLLEALATRSSDDTPHLSITTVVPTAAPSAAAQRVMREIGQRLEKFARLMGVPFSFRAVHHAGDLADLDLAALDLREGGATAALAVNCVNALRGVARGRDAFVASLRRLEPRVVTVVEEEADLAAPEADASSEADTDAAFVKVFGEGLRFFSAYMDSLEESFPKTSNERLSLERAVGRAIVDLVSCPASQSAERRETAASWARRMRSAGFSPAAFSEDVADDVRSLLRRYKEGWSMRDAGGATDDAAGAAAAGAFLAWKEQPVVWASAWKP</sequence>